<accession>A3DDD8</accession>
<evidence type="ECO:0000255" key="1">
    <source>
        <dbReference type="HAMAP-Rule" id="MF_00300"/>
    </source>
</evidence>
<protein>
    <recommendedName>
        <fullName evidence="1">Chorismate synthase</fullName>
        <shortName evidence="1">CS</shortName>
        <ecNumber evidence="1">4.2.3.5</ecNumber>
    </recommendedName>
    <alternativeName>
        <fullName evidence="1">5-enolpyruvylshikimate-3-phosphate phospholyase</fullName>
    </alternativeName>
</protein>
<name>AROC_ACET2</name>
<dbReference type="EC" id="4.2.3.5" evidence="1"/>
<dbReference type="EMBL" id="CP000568">
    <property type="protein sequence ID" value="ABN51967.1"/>
    <property type="molecule type" value="Genomic_DNA"/>
</dbReference>
<dbReference type="RefSeq" id="WP_003516259.1">
    <property type="nucleotide sequence ID" value="NC_009012.1"/>
</dbReference>
<dbReference type="SMR" id="A3DDD8"/>
<dbReference type="STRING" id="203119.Cthe_0732"/>
<dbReference type="GeneID" id="35804607"/>
<dbReference type="KEGG" id="cth:Cthe_0732"/>
<dbReference type="eggNOG" id="COG0082">
    <property type="taxonomic scope" value="Bacteria"/>
</dbReference>
<dbReference type="HOGENOM" id="CLU_034547_0_1_9"/>
<dbReference type="OrthoDB" id="9771806at2"/>
<dbReference type="UniPathway" id="UPA00053">
    <property type="reaction ID" value="UER00090"/>
</dbReference>
<dbReference type="Proteomes" id="UP000002145">
    <property type="component" value="Chromosome"/>
</dbReference>
<dbReference type="GO" id="GO:0005829">
    <property type="term" value="C:cytosol"/>
    <property type="evidence" value="ECO:0007669"/>
    <property type="project" value="TreeGrafter"/>
</dbReference>
<dbReference type="GO" id="GO:0004107">
    <property type="term" value="F:chorismate synthase activity"/>
    <property type="evidence" value="ECO:0007669"/>
    <property type="project" value="UniProtKB-UniRule"/>
</dbReference>
<dbReference type="GO" id="GO:0010181">
    <property type="term" value="F:FMN binding"/>
    <property type="evidence" value="ECO:0007669"/>
    <property type="project" value="TreeGrafter"/>
</dbReference>
<dbReference type="GO" id="GO:0008652">
    <property type="term" value="P:amino acid biosynthetic process"/>
    <property type="evidence" value="ECO:0007669"/>
    <property type="project" value="UniProtKB-KW"/>
</dbReference>
<dbReference type="GO" id="GO:0009073">
    <property type="term" value="P:aromatic amino acid family biosynthetic process"/>
    <property type="evidence" value="ECO:0007669"/>
    <property type="project" value="UniProtKB-KW"/>
</dbReference>
<dbReference type="GO" id="GO:0009423">
    <property type="term" value="P:chorismate biosynthetic process"/>
    <property type="evidence" value="ECO:0007669"/>
    <property type="project" value="UniProtKB-UniRule"/>
</dbReference>
<dbReference type="CDD" id="cd07304">
    <property type="entry name" value="Chorismate_synthase"/>
    <property type="match status" value="1"/>
</dbReference>
<dbReference type="Gene3D" id="3.60.150.10">
    <property type="entry name" value="Chorismate synthase AroC"/>
    <property type="match status" value="1"/>
</dbReference>
<dbReference type="HAMAP" id="MF_00300">
    <property type="entry name" value="Chorismate_synth"/>
    <property type="match status" value="1"/>
</dbReference>
<dbReference type="InterPro" id="IPR000453">
    <property type="entry name" value="Chorismate_synth"/>
</dbReference>
<dbReference type="InterPro" id="IPR035904">
    <property type="entry name" value="Chorismate_synth_AroC_sf"/>
</dbReference>
<dbReference type="InterPro" id="IPR020541">
    <property type="entry name" value="Chorismate_synthase_CS"/>
</dbReference>
<dbReference type="NCBIfam" id="TIGR00033">
    <property type="entry name" value="aroC"/>
    <property type="match status" value="1"/>
</dbReference>
<dbReference type="NCBIfam" id="NF003793">
    <property type="entry name" value="PRK05382.1"/>
    <property type="match status" value="1"/>
</dbReference>
<dbReference type="PANTHER" id="PTHR21085">
    <property type="entry name" value="CHORISMATE SYNTHASE"/>
    <property type="match status" value="1"/>
</dbReference>
<dbReference type="PANTHER" id="PTHR21085:SF0">
    <property type="entry name" value="CHORISMATE SYNTHASE"/>
    <property type="match status" value="1"/>
</dbReference>
<dbReference type="Pfam" id="PF01264">
    <property type="entry name" value="Chorismate_synt"/>
    <property type="match status" value="1"/>
</dbReference>
<dbReference type="PIRSF" id="PIRSF001456">
    <property type="entry name" value="Chorismate_synth"/>
    <property type="match status" value="1"/>
</dbReference>
<dbReference type="SUPFAM" id="SSF103263">
    <property type="entry name" value="Chorismate synthase, AroC"/>
    <property type="match status" value="1"/>
</dbReference>
<dbReference type="PROSITE" id="PS00788">
    <property type="entry name" value="CHORISMATE_SYNTHASE_2"/>
    <property type="match status" value="1"/>
</dbReference>
<sequence>MVGNTFGRIFRVTTCGESYAGAFRKNLQIPKELFGGLIAIVDGVPPGIKLTADFVQEELDKRRPGKTPLDTPRKERDKVYIFSGVMEDDITTGAPVGMIIPNDVIEDEHINKHKSYKEVVRPGQAGYTFFKKYGQFADNIGAGRASGRETAARVAAGAVAKAVLDTMGIDVIAFVTEIHGIKAQENITYEMAKANYRKNEINCPDLEKAKEMIEELKRIKEEGDSVGGVVEIIARGVPAGLGEPVFDKLQATLAHALMSIGAIKGIEFGEGFGHTKLKGSESNDVPYYDEASGRVRFKTNRAGGILGGISNGEDIRIRVAVKPTPTISIPQKTVNMYTLENVEVEFNTRNDPSICPRIYPVCEAMVRIALLDALYIAKGYRAISSNIDPRWDRL</sequence>
<keyword id="KW-0028">Amino-acid biosynthesis</keyword>
<keyword id="KW-0057">Aromatic amino acid biosynthesis</keyword>
<keyword id="KW-0274">FAD</keyword>
<keyword id="KW-0285">Flavoprotein</keyword>
<keyword id="KW-0288">FMN</keyword>
<keyword id="KW-0456">Lyase</keyword>
<keyword id="KW-0521">NADP</keyword>
<keyword id="KW-1185">Reference proteome</keyword>
<organism>
    <name type="scientific">Acetivibrio thermocellus (strain ATCC 27405 / DSM 1237 / JCM 9322 / NBRC 103400 / NCIMB 10682 / NRRL B-4536 / VPI 7372)</name>
    <name type="common">Clostridium thermocellum</name>
    <dbReference type="NCBI Taxonomy" id="203119"/>
    <lineage>
        <taxon>Bacteria</taxon>
        <taxon>Bacillati</taxon>
        <taxon>Bacillota</taxon>
        <taxon>Clostridia</taxon>
        <taxon>Eubacteriales</taxon>
        <taxon>Oscillospiraceae</taxon>
        <taxon>Acetivibrio</taxon>
    </lineage>
</organism>
<feature type="chain" id="PRO_0000405970" description="Chorismate synthase">
    <location>
        <begin position="1"/>
        <end position="394"/>
    </location>
</feature>
<feature type="binding site" evidence="1">
    <location>
        <position position="62"/>
    </location>
    <ligand>
        <name>NADP(+)</name>
        <dbReference type="ChEBI" id="CHEBI:58349"/>
    </ligand>
</feature>
<feature type="binding site" evidence="1">
    <location>
        <begin position="144"/>
        <end position="146"/>
    </location>
    <ligand>
        <name>FMN</name>
        <dbReference type="ChEBI" id="CHEBI:58210"/>
    </ligand>
</feature>
<feature type="binding site" evidence="1">
    <location>
        <position position="307"/>
    </location>
    <ligand>
        <name>FMN</name>
        <dbReference type="ChEBI" id="CHEBI:58210"/>
    </ligand>
</feature>
<feature type="binding site" evidence="1">
    <location>
        <begin position="322"/>
        <end position="326"/>
    </location>
    <ligand>
        <name>FMN</name>
        <dbReference type="ChEBI" id="CHEBI:58210"/>
    </ligand>
</feature>
<feature type="binding site" evidence="1">
    <location>
        <position position="349"/>
    </location>
    <ligand>
        <name>FMN</name>
        <dbReference type="ChEBI" id="CHEBI:58210"/>
    </ligand>
</feature>
<comment type="function">
    <text evidence="1">Catalyzes the anti-1,4-elimination of the C-3 phosphate and the C-6 proR hydrogen from 5-enolpyruvylshikimate-3-phosphate (EPSP) to yield chorismate, which is the branch point compound that serves as the starting substrate for the three terminal pathways of aromatic amino acid biosynthesis. This reaction introduces a second double bond into the aromatic ring system.</text>
</comment>
<comment type="catalytic activity">
    <reaction evidence="1">
        <text>5-O-(1-carboxyvinyl)-3-phosphoshikimate = chorismate + phosphate</text>
        <dbReference type="Rhea" id="RHEA:21020"/>
        <dbReference type="ChEBI" id="CHEBI:29748"/>
        <dbReference type="ChEBI" id="CHEBI:43474"/>
        <dbReference type="ChEBI" id="CHEBI:57701"/>
        <dbReference type="EC" id="4.2.3.5"/>
    </reaction>
</comment>
<comment type="cofactor">
    <cofactor evidence="1">
        <name>FMNH2</name>
        <dbReference type="ChEBI" id="CHEBI:57618"/>
    </cofactor>
    <text evidence="1">Reduced FMN (FMNH(2)).</text>
</comment>
<comment type="pathway">
    <text evidence="1">Metabolic intermediate biosynthesis; chorismate biosynthesis; chorismate from D-erythrose 4-phosphate and phosphoenolpyruvate: step 7/7.</text>
</comment>
<comment type="subunit">
    <text evidence="1">Homotetramer.</text>
</comment>
<comment type="similarity">
    <text evidence="1">Belongs to the chorismate synthase family.</text>
</comment>
<gene>
    <name evidence="1" type="primary">aroC</name>
    <name type="ordered locus">Cthe_0732</name>
</gene>
<reference key="1">
    <citation type="submission" date="2007-02" db="EMBL/GenBank/DDBJ databases">
        <title>Complete sequence of Clostridium thermocellum ATCC 27405.</title>
        <authorList>
            <consortium name="US DOE Joint Genome Institute"/>
            <person name="Copeland A."/>
            <person name="Lucas S."/>
            <person name="Lapidus A."/>
            <person name="Barry K."/>
            <person name="Detter J.C."/>
            <person name="Glavina del Rio T."/>
            <person name="Hammon N."/>
            <person name="Israni S."/>
            <person name="Dalin E."/>
            <person name="Tice H."/>
            <person name="Pitluck S."/>
            <person name="Chertkov O."/>
            <person name="Brettin T."/>
            <person name="Bruce D."/>
            <person name="Han C."/>
            <person name="Tapia R."/>
            <person name="Gilna P."/>
            <person name="Schmutz J."/>
            <person name="Larimer F."/>
            <person name="Land M."/>
            <person name="Hauser L."/>
            <person name="Kyrpides N."/>
            <person name="Mikhailova N."/>
            <person name="Wu J.H.D."/>
            <person name="Newcomb M."/>
            <person name="Richardson P."/>
        </authorList>
    </citation>
    <scope>NUCLEOTIDE SEQUENCE [LARGE SCALE GENOMIC DNA]</scope>
    <source>
        <strain>ATCC 27405 / DSM 1237 / JCM 9322 / NBRC 103400 / NCIMB 10682 / NRRL B-4536 / VPI 7372</strain>
    </source>
</reference>
<proteinExistence type="inferred from homology"/>